<organism>
    <name type="scientific">Zymomonas mobilis subsp. mobilis (strain ATCC 31821 / ZM4 / CP4)</name>
    <dbReference type="NCBI Taxonomy" id="264203"/>
    <lineage>
        <taxon>Bacteria</taxon>
        <taxon>Pseudomonadati</taxon>
        <taxon>Pseudomonadota</taxon>
        <taxon>Alphaproteobacteria</taxon>
        <taxon>Sphingomonadales</taxon>
        <taxon>Zymomonadaceae</taxon>
        <taxon>Zymomonas</taxon>
    </lineage>
</organism>
<feature type="chain" id="PRO_0000181215" description="Large ribosomal subunit protein bL27">
    <location>
        <begin position="1"/>
        <end position="89"/>
    </location>
</feature>
<feature type="region of interest" description="Disordered" evidence="2">
    <location>
        <begin position="1"/>
        <end position="20"/>
    </location>
</feature>
<comment type="similarity">
    <text evidence="1">Belongs to the bacterial ribosomal protein bL27 family.</text>
</comment>
<name>RL27_ZYMMO</name>
<proteinExistence type="inferred from homology"/>
<keyword id="KW-1185">Reference proteome</keyword>
<keyword id="KW-0687">Ribonucleoprotein</keyword>
<keyword id="KW-0689">Ribosomal protein</keyword>
<gene>
    <name evidence="1" type="primary">rpmA</name>
    <name type="ordered locus">ZMO0209</name>
</gene>
<protein>
    <recommendedName>
        <fullName evidence="1">Large ribosomal subunit protein bL27</fullName>
    </recommendedName>
    <alternativeName>
        <fullName evidence="3">50S ribosomal protein L27</fullName>
    </alternativeName>
</protein>
<accession>Q5NR21</accession>
<dbReference type="EMBL" id="AE008692">
    <property type="protein sequence ID" value="AAV88833.1"/>
    <property type="molecule type" value="Genomic_DNA"/>
</dbReference>
<dbReference type="RefSeq" id="WP_011240160.1">
    <property type="nucleotide sequence ID" value="NZ_CP035711.1"/>
</dbReference>
<dbReference type="SMR" id="Q5NR21"/>
<dbReference type="STRING" id="264203.ZMO0209"/>
<dbReference type="GeneID" id="79904556"/>
<dbReference type="KEGG" id="zmo:ZMO0209"/>
<dbReference type="eggNOG" id="COG0211">
    <property type="taxonomic scope" value="Bacteria"/>
</dbReference>
<dbReference type="HOGENOM" id="CLU_095424_4_1_5"/>
<dbReference type="Proteomes" id="UP000001173">
    <property type="component" value="Chromosome"/>
</dbReference>
<dbReference type="GO" id="GO:0022625">
    <property type="term" value="C:cytosolic large ribosomal subunit"/>
    <property type="evidence" value="ECO:0007669"/>
    <property type="project" value="TreeGrafter"/>
</dbReference>
<dbReference type="GO" id="GO:0003735">
    <property type="term" value="F:structural constituent of ribosome"/>
    <property type="evidence" value="ECO:0007669"/>
    <property type="project" value="InterPro"/>
</dbReference>
<dbReference type="GO" id="GO:0006412">
    <property type="term" value="P:translation"/>
    <property type="evidence" value="ECO:0007669"/>
    <property type="project" value="UniProtKB-UniRule"/>
</dbReference>
<dbReference type="FunFam" id="2.40.50.100:FF:000060">
    <property type="entry name" value="Apicoplast ribosomal protein L27"/>
    <property type="match status" value="1"/>
</dbReference>
<dbReference type="Gene3D" id="2.40.50.100">
    <property type="match status" value="1"/>
</dbReference>
<dbReference type="HAMAP" id="MF_00539">
    <property type="entry name" value="Ribosomal_bL27"/>
    <property type="match status" value="1"/>
</dbReference>
<dbReference type="InterPro" id="IPR001684">
    <property type="entry name" value="Ribosomal_bL27"/>
</dbReference>
<dbReference type="InterPro" id="IPR018261">
    <property type="entry name" value="Ribosomal_bL27_CS"/>
</dbReference>
<dbReference type="NCBIfam" id="TIGR00062">
    <property type="entry name" value="L27"/>
    <property type="match status" value="1"/>
</dbReference>
<dbReference type="PANTHER" id="PTHR15893:SF0">
    <property type="entry name" value="LARGE RIBOSOMAL SUBUNIT PROTEIN BL27M"/>
    <property type="match status" value="1"/>
</dbReference>
<dbReference type="PANTHER" id="PTHR15893">
    <property type="entry name" value="RIBOSOMAL PROTEIN L27"/>
    <property type="match status" value="1"/>
</dbReference>
<dbReference type="Pfam" id="PF01016">
    <property type="entry name" value="Ribosomal_L27"/>
    <property type="match status" value="1"/>
</dbReference>
<dbReference type="PRINTS" id="PR00063">
    <property type="entry name" value="RIBOSOMALL27"/>
</dbReference>
<dbReference type="SUPFAM" id="SSF110324">
    <property type="entry name" value="Ribosomal L27 protein-like"/>
    <property type="match status" value="1"/>
</dbReference>
<dbReference type="PROSITE" id="PS00831">
    <property type="entry name" value="RIBOSOMAL_L27"/>
    <property type="match status" value="1"/>
</dbReference>
<evidence type="ECO:0000255" key="1">
    <source>
        <dbReference type="HAMAP-Rule" id="MF_00539"/>
    </source>
</evidence>
<evidence type="ECO:0000256" key="2">
    <source>
        <dbReference type="SAM" id="MobiDB-lite"/>
    </source>
</evidence>
<evidence type="ECO:0000305" key="3"/>
<sequence length="89" mass="9381">MAHKKAGGSSRNGRDSAGRRLGVKKFGGESVIGGNIIIRQRGTKVYAGRNVGMGKDHTLFATAEGRVVFHKGKLGRSYVSVDALPLAAE</sequence>
<reference key="1">
    <citation type="journal article" date="2005" name="Nat. Biotechnol.">
        <title>The genome sequence of the ethanologenic bacterium Zymomonas mobilis ZM4.</title>
        <authorList>
            <person name="Seo J.-S."/>
            <person name="Chong H."/>
            <person name="Park H.S."/>
            <person name="Yoon K.-O."/>
            <person name="Jung C."/>
            <person name="Kim J.J."/>
            <person name="Hong J.H."/>
            <person name="Kim H."/>
            <person name="Kim J.-H."/>
            <person name="Kil J.-I."/>
            <person name="Park C.J."/>
            <person name="Oh H.-M."/>
            <person name="Lee J.-S."/>
            <person name="Jin S.-J."/>
            <person name="Um H.-W."/>
            <person name="Lee H.-J."/>
            <person name="Oh S.-J."/>
            <person name="Kim J.Y."/>
            <person name="Kang H.L."/>
            <person name="Lee S.Y."/>
            <person name="Lee K.J."/>
            <person name="Kang H.S."/>
        </authorList>
    </citation>
    <scope>NUCLEOTIDE SEQUENCE [LARGE SCALE GENOMIC DNA]</scope>
    <source>
        <strain>ATCC 31821 / ZM4 / CP4</strain>
    </source>
</reference>